<evidence type="ECO:0000255" key="1">
    <source>
        <dbReference type="HAMAP-Rule" id="MF_00644"/>
    </source>
</evidence>
<evidence type="ECO:0007829" key="2">
    <source>
        <dbReference type="PDB" id="3JCU"/>
    </source>
</evidence>
<keyword id="KW-0002">3D-structure</keyword>
<keyword id="KW-0150">Chloroplast</keyword>
<keyword id="KW-0472">Membrane</keyword>
<keyword id="KW-0602">Photosynthesis</keyword>
<keyword id="KW-0604">Photosystem II</keyword>
<keyword id="KW-0934">Plastid</keyword>
<keyword id="KW-0674">Reaction center</keyword>
<keyword id="KW-1185">Reference proteome</keyword>
<keyword id="KW-0793">Thylakoid</keyword>
<keyword id="KW-0812">Transmembrane</keyword>
<keyword id="KW-1133">Transmembrane helix</keyword>
<accession>Q9M3M6</accession>
<name>PSBZ_SPIOL</name>
<reference key="1">
    <citation type="journal article" date="2001" name="Plant Mol. Biol.">
        <title>The plastid chromosome of spinach (Spinacia oleracea): complete nucleotide sequence and gene organization.</title>
        <authorList>
            <person name="Schmitz-Linneweber C."/>
            <person name="Maier R.M."/>
            <person name="Alcaraz J.-P."/>
            <person name="Cottet A."/>
            <person name="Herrmann R.G."/>
            <person name="Mache R."/>
        </authorList>
    </citation>
    <scope>NUCLEOTIDE SEQUENCE [LARGE SCALE GENOMIC DNA]</scope>
    <source>
        <strain>cv. Geant d'hiver</strain>
        <strain>cv. Monatol</strain>
    </source>
</reference>
<gene>
    <name evidence="1" type="primary">psbZ</name>
    <name type="synonym">ycf9</name>
</gene>
<protein>
    <recommendedName>
        <fullName evidence="1">Photosystem II reaction center protein Z</fullName>
        <shortName evidence="1">PSII-Z</shortName>
    </recommendedName>
</protein>
<proteinExistence type="evidence at protein level"/>
<feature type="chain" id="PRO_0000217729" description="Photosystem II reaction center protein Z">
    <location>
        <begin position="1"/>
        <end position="62"/>
    </location>
</feature>
<feature type="transmembrane region" description="Helical" evidence="1">
    <location>
        <begin position="8"/>
        <end position="28"/>
    </location>
</feature>
<feature type="transmembrane region" description="Helical" evidence="1">
    <location>
        <begin position="41"/>
        <end position="61"/>
    </location>
</feature>
<feature type="helix" evidence="2">
    <location>
        <begin position="5"/>
        <end position="28"/>
    </location>
</feature>
<feature type="helix" evidence="2">
    <location>
        <begin position="30"/>
        <end position="32"/>
    </location>
</feature>
<feature type="helix" evidence="2">
    <location>
        <begin position="33"/>
        <end position="60"/>
    </location>
</feature>
<dbReference type="EMBL" id="AJ400848">
    <property type="protein sequence ID" value="CAB88723.1"/>
    <property type="molecule type" value="Genomic_DNA"/>
</dbReference>
<dbReference type="RefSeq" id="NP_054930.1">
    <property type="nucleotide sequence ID" value="NC_002202.1"/>
</dbReference>
<dbReference type="PDB" id="3JCU">
    <property type="method" value="EM"/>
    <property type="resolution" value="3.20 A"/>
    <property type="chains" value="Z/z=1-62"/>
</dbReference>
<dbReference type="PDB" id="8Z9D">
    <property type="method" value="EM"/>
    <property type="resolution" value="3.22 A"/>
    <property type="chains" value="Z/ZZ/Zz/z=1-62"/>
</dbReference>
<dbReference type="PDBsum" id="3JCU"/>
<dbReference type="PDBsum" id="8Z9D"/>
<dbReference type="EMDB" id="EMD-39860"/>
<dbReference type="SMR" id="Q9M3M6"/>
<dbReference type="DIP" id="DIP-62029N"/>
<dbReference type="FunCoup" id="Q9M3M6">
    <property type="interactions" value="48"/>
</dbReference>
<dbReference type="IntAct" id="Q9M3M6">
    <property type="interactions" value="1"/>
</dbReference>
<dbReference type="STRING" id="3562.Q9M3M6"/>
<dbReference type="GeneID" id="2715694"/>
<dbReference type="KEGG" id="soe:2715694"/>
<dbReference type="InParanoid" id="Q9M3M6"/>
<dbReference type="OrthoDB" id="1161947at2759"/>
<dbReference type="Proteomes" id="UP001155700">
    <property type="component" value="Chloroplast Pltd"/>
</dbReference>
<dbReference type="GO" id="GO:0009535">
    <property type="term" value="C:chloroplast thylakoid membrane"/>
    <property type="evidence" value="ECO:0007669"/>
    <property type="project" value="UniProtKB-SubCell"/>
</dbReference>
<dbReference type="GO" id="GO:0009539">
    <property type="term" value="C:photosystem II reaction center"/>
    <property type="evidence" value="ECO:0007669"/>
    <property type="project" value="InterPro"/>
</dbReference>
<dbReference type="GO" id="GO:0015979">
    <property type="term" value="P:photosynthesis"/>
    <property type="evidence" value="ECO:0007669"/>
    <property type="project" value="UniProtKB-UniRule"/>
</dbReference>
<dbReference type="GO" id="GO:0042549">
    <property type="term" value="P:photosystem II stabilization"/>
    <property type="evidence" value="ECO:0007669"/>
    <property type="project" value="InterPro"/>
</dbReference>
<dbReference type="FunFam" id="1.10.287.740:FF:000001">
    <property type="entry name" value="Photosystem II reaction center protein Z"/>
    <property type="match status" value="1"/>
</dbReference>
<dbReference type="Gene3D" id="1.10.287.740">
    <property type="entry name" value="Photosystem II PsbZ, reaction centre"/>
    <property type="match status" value="1"/>
</dbReference>
<dbReference type="HAMAP" id="MF_00644">
    <property type="entry name" value="PSII_PsbZ"/>
    <property type="match status" value="1"/>
</dbReference>
<dbReference type="InterPro" id="IPR002644">
    <property type="entry name" value="PSII_PsbZ"/>
</dbReference>
<dbReference type="InterPro" id="IPR036512">
    <property type="entry name" value="PSII_PsbZ_sf"/>
</dbReference>
<dbReference type="NCBIfam" id="TIGR03043">
    <property type="entry name" value="PS_II_psbZ"/>
    <property type="match status" value="1"/>
</dbReference>
<dbReference type="PANTHER" id="PTHR34971">
    <property type="entry name" value="PHOTOSYSTEM II REACTION CENTER PROTEIN Z"/>
    <property type="match status" value="1"/>
</dbReference>
<dbReference type="PANTHER" id="PTHR34971:SF2">
    <property type="entry name" value="PHOTOSYSTEM II REACTION CENTER PROTEIN Z"/>
    <property type="match status" value="1"/>
</dbReference>
<dbReference type="Pfam" id="PF01737">
    <property type="entry name" value="Ycf9"/>
    <property type="match status" value="1"/>
</dbReference>
<dbReference type="SUPFAM" id="SSF161055">
    <property type="entry name" value="PsbZ-like"/>
    <property type="match status" value="1"/>
</dbReference>
<organism>
    <name type="scientific">Spinacia oleracea</name>
    <name type="common">Spinach</name>
    <dbReference type="NCBI Taxonomy" id="3562"/>
    <lineage>
        <taxon>Eukaryota</taxon>
        <taxon>Viridiplantae</taxon>
        <taxon>Streptophyta</taxon>
        <taxon>Embryophyta</taxon>
        <taxon>Tracheophyta</taxon>
        <taxon>Spermatophyta</taxon>
        <taxon>Magnoliopsida</taxon>
        <taxon>eudicotyledons</taxon>
        <taxon>Gunneridae</taxon>
        <taxon>Pentapetalae</taxon>
        <taxon>Caryophyllales</taxon>
        <taxon>Chenopodiaceae</taxon>
        <taxon>Chenopodioideae</taxon>
        <taxon>Anserineae</taxon>
        <taxon>Spinacia</taxon>
    </lineage>
</organism>
<geneLocation type="chloroplast"/>
<comment type="function">
    <text evidence="1">May control the interaction of photosystem II (PSII) cores with the light-harvesting antenna, regulates electron flow through the 2 photosystem reaction centers. PSII is a light-driven water plastoquinone oxidoreductase, using light energy to abstract electrons from H(2)O, generating a proton gradient subsequently used for ATP formation.</text>
</comment>
<comment type="subunit">
    <text evidence="1">PSII is composed of 1 copy each of membrane proteins PsbA, PsbB, PsbC, PsbD, PsbE, PsbF, PsbH, PsbI, PsbJ, PsbK, PsbL, PsbM, PsbT, PsbY, PsbZ, Psb30/Ycf12, at least 3 peripheral proteins of the oxygen-evolving complex and a large number of cofactors. It forms dimeric complexes.</text>
</comment>
<comment type="subcellular location">
    <subcellularLocation>
        <location evidence="1">Plastid</location>
        <location evidence="1">Chloroplast thylakoid membrane</location>
        <topology evidence="1">Multi-pass membrane protein</topology>
    </subcellularLocation>
</comment>
<comment type="similarity">
    <text evidence="1">Belongs to the PsbZ family.</text>
</comment>
<sequence length="62" mass="6541">MTIAFQLAVFALIATSSILLISVPVVFASPDGWSSNKNIVFSGTSLWLGLVFLVGILNSLIS</sequence>